<evidence type="ECO:0000250" key="1"/>
<evidence type="ECO:0000250" key="2">
    <source>
        <dbReference type="UniProtKB" id="P01148"/>
    </source>
</evidence>
<evidence type="ECO:0000255" key="3"/>
<evidence type="ECO:0000269" key="4">
    <source>
    </source>
</evidence>
<evidence type="ECO:0000305" key="5"/>
<sequence>MILKLMAGILLLTVCLEGCSSQHWSYGLRPGGKRNTEHLVESFQEMGKEVDQMAEPQHFECTVHWPRSPLRDLRGALESLIEEEARQKKM</sequence>
<accession>P13562</accession>
<protein>
    <recommendedName>
        <fullName>Progonadoliberin-1</fullName>
    </recommendedName>
    <alternativeName>
        <fullName>Progonadoliberin I</fullName>
    </alternativeName>
    <component>
        <recommendedName>
            <fullName>Gonadoliberin-1</fullName>
        </recommendedName>
        <alternativeName>
            <fullName>Gonadoliberin I</fullName>
        </alternativeName>
        <alternativeName>
            <fullName>Gonadotropin-releasing hormone I</fullName>
            <shortName>GnRH-I</shortName>
        </alternativeName>
        <alternativeName>
            <fullName>Luliberin I</fullName>
        </alternativeName>
        <alternativeName>
            <fullName>Luteinizing hormone-releasing hormone I</fullName>
            <shortName>LH-RH I</shortName>
        </alternativeName>
    </component>
    <component>
        <recommendedName>
            <fullName>Prolactin release-inhibiting factor 1</fullName>
        </recommendedName>
        <alternativeName>
            <fullName>Prolactin release-inhibiting factor I</fullName>
        </alternativeName>
    </component>
</protein>
<keyword id="KW-0027">Amidation</keyword>
<keyword id="KW-0165">Cleavage on pair of basic residues</keyword>
<keyword id="KW-0372">Hormone</keyword>
<keyword id="KW-0873">Pyrrolidone carboxylic acid</keyword>
<keyword id="KW-1185">Reference proteome</keyword>
<keyword id="KW-0964">Secreted</keyword>
<keyword id="KW-0732">Signal</keyword>
<dbReference type="EMBL" id="M14872">
    <property type="protein sequence ID" value="AAA37717.1"/>
    <property type="molecule type" value="Genomic_DNA"/>
</dbReference>
<dbReference type="CCDS" id="CCDS27231.1"/>
<dbReference type="PIR" id="A47578">
    <property type="entry name" value="RHMSG"/>
</dbReference>
<dbReference type="RefSeq" id="NP_032171.1">
    <property type="nucleotide sequence ID" value="NM_008145.4"/>
</dbReference>
<dbReference type="SMR" id="P13562"/>
<dbReference type="FunCoup" id="P13562">
    <property type="interactions" value="485"/>
</dbReference>
<dbReference type="IntAct" id="P13562">
    <property type="interactions" value="3"/>
</dbReference>
<dbReference type="STRING" id="10090.ENSMUSP00000106724"/>
<dbReference type="PaxDb" id="10090-ENSMUSP00000106724"/>
<dbReference type="Antibodypedia" id="5376">
    <property type="antibodies" value="486 antibodies from 34 providers"/>
</dbReference>
<dbReference type="DNASU" id="14714"/>
<dbReference type="Ensembl" id="ENSMUST00000111095.4">
    <property type="protein sequence ID" value="ENSMUSP00000106724.3"/>
    <property type="gene ID" value="ENSMUSG00000015812.9"/>
</dbReference>
<dbReference type="Ensembl" id="ENSMUST00000223951.2">
    <property type="protein sequence ID" value="ENSMUSP00000153071.2"/>
    <property type="gene ID" value="ENSMUSG00000015812.9"/>
</dbReference>
<dbReference type="GeneID" id="14714"/>
<dbReference type="KEGG" id="mmu:14714"/>
<dbReference type="UCSC" id="uc007ulh.2">
    <property type="organism name" value="mouse"/>
</dbReference>
<dbReference type="AGR" id="MGI:95789"/>
<dbReference type="CTD" id="2796"/>
<dbReference type="MGI" id="MGI:95789">
    <property type="gene designation" value="Gnrh1"/>
</dbReference>
<dbReference type="VEuPathDB" id="HostDB:ENSMUSG00000015812"/>
<dbReference type="eggNOG" id="ENOG502S8C8">
    <property type="taxonomic scope" value="Eukaryota"/>
</dbReference>
<dbReference type="GeneTree" id="ENSGT00390000008225"/>
<dbReference type="HOGENOM" id="CLU_2412553_0_0_1"/>
<dbReference type="InParanoid" id="P13562"/>
<dbReference type="OMA" id="FECTVHQ"/>
<dbReference type="OrthoDB" id="8716567at2759"/>
<dbReference type="PhylomeDB" id="P13562"/>
<dbReference type="TreeFam" id="TF330934"/>
<dbReference type="Reactome" id="R-MMU-375281">
    <property type="pathway name" value="Hormone ligand-binding receptors"/>
</dbReference>
<dbReference type="Reactome" id="R-MMU-416476">
    <property type="pathway name" value="G alpha (q) signalling events"/>
</dbReference>
<dbReference type="BioGRID-ORCS" id="14714">
    <property type="hits" value="1 hit in 77 CRISPR screens"/>
</dbReference>
<dbReference type="ChiTaRS" id="Gnrh1">
    <property type="organism name" value="mouse"/>
</dbReference>
<dbReference type="PRO" id="PR:P13562"/>
<dbReference type="Proteomes" id="UP000000589">
    <property type="component" value="Chromosome 14"/>
</dbReference>
<dbReference type="RNAct" id="P13562">
    <property type="molecule type" value="protein"/>
</dbReference>
<dbReference type="Bgee" id="ENSMUSG00000015812">
    <property type="expression patterns" value="Expressed in primary oocyte and 91 other cell types or tissues"/>
</dbReference>
<dbReference type="ExpressionAtlas" id="P13562">
    <property type="expression patterns" value="baseline and differential"/>
</dbReference>
<dbReference type="GO" id="GO:0043679">
    <property type="term" value="C:axon terminus"/>
    <property type="evidence" value="ECO:0007669"/>
    <property type="project" value="Ensembl"/>
</dbReference>
<dbReference type="GO" id="GO:0098556">
    <property type="term" value="C:cytoplasmic side of rough endoplasmic reticulum membrane"/>
    <property type="evidence" value="ECO:0007669"/>
    <property type="project" value="Ensembl"/>
</dbReference>
<dbReference type="GO" id="GO:0030425">
    <property type="term" value="C:dendrite"/>
    <property type="evidence" value="ECO:0007669"/>
    <property type="project" value="Ensembl"/>
</dbReference>
<dbReference type="GO" id="GO:0005615">
    <property type="term" value="C:extracellular space"/>
    <property type="evidence" value="ECO:0000314"/>
    <property type="project" value="UniProtKB"/>
</dbReference>
<dbReference type="GO" id="GO:0005798">
    <property type="term" value="C:Golgi-associated vesicle"/>
    <property type="evidence" value="ECO:0007669"/>
    <property type="project" value="Ensembl"/>
</dbReference>
<dbReference type="GO" id="GO:1990008">
    <property type="term" value="C:neurosecretory vesicle"/>
    <property type="evidence" value="ECO:0007669"/>
    <property type="project" value="Ensembl"/>
</dbReference>
<dbReference type="GO" id="GO:0043204">
    <property type="term" value="C:perikaryon"/>
    <property type="evidence" value="ECO:0007669"/>
    <property type="project" value="Ensembl"/>
</dbReference>
<dbReference type="GO" id="GO:0005183">
    <property type="term" value="F:gonadotropin hormone-releasing hormone activity"/>
    <property type="evidence" value="ECO:0007669"/>
    <property type="project" value="Ensembl"/>
</dbReference>
<dbReference type="GO" id="GO:0044849">
    <property type="term" value="P:estrous cycle"/>
    <property type="evidence" value="ECO:0007669"/>
    <property type="project" value="Ensembl"/>
</dbReference>
<dbReference type="GO" id="GO:0007565">
    <property type="term" value="P:female pregnancy"/>
    <property type="evidence" value="ECO:0007669"/>
    <property type="project" value="Ensembl"/>
</dbReference>
<dbReference type="GO" id="GO:0030238">
    <property type="term" value="P:male sex determination"/>
    <property type="evidence" value="ECO:0007669"/>
    <property type="project" value="Ensembl"/>
</dbReference>
<dbReference type="GO" id="GO:0043066">
    <property type="term" value="P:negative regulation of apoptotic process"/>
    <property type="evidence" value="ECO:0007669"/>
    <property type="project" value="Ensembl"/>
</dbReference>
<dbReference type="GO" id="GO:0033087">
    <property type="term" value="P:negative regulation of immature T cell proliferation"/>
    <property type="evidence" value="ECO:0007669"/>
    <property type="project" value="Ensembl"/>
</dbReference>
<dbReference type="GO" id="GO:2001223">
    <property type="term" value="P:negative regulation of neuron migration"/>
    <property type="evidence" value="ECO:0000314"/>
    <property type="project" value="MGI"/>
</dbReference>
<dbReference type="GO" id="GO:0010468">
    <property type="term" value="P:regulation of gene expression"/>
    <property type="evidence" value="ECO:0000315"/>
    <property type="project" value="MGI"/>
</dbReference>
<dbReference type="GO" id="GO:2000354">
    <property type="term" value="P:regulation of ovarian follicle development"/>
    <property type="evidence" value="ECO:0000315"/>
    <property type="project" value="MGI"/>
</dbReference>
<dbReference type="GO" id="GO:0045471">
    <property type="term" value="P:response to ethanol"/>
    <property type="evidence" value="ECO:0000314"/>
    <property type="project" value="MGI"/>
</dbReference>
<dbReference type="GO" id="GO:0032496">
    <property type="term" value="P:response to lipopolysaccharide"/>
    <property type="evidence" value="ECO:0007669"/>
    <property type="project" value="Ensembl"/>
</dbReference>
<dbReference type="GO" id="GO:0035864">
    <property type="term" value="P:response to potassium ion"/>
    <property type="evidence" value="ECO:0007669"/>
    <property type="project" value="Ensembl"/>
</dbReference>
<dbReference type="GO" id="GO:1990637">
    <property type="term" value="P:response to prolactin"/>
    <property type="evidence" value="ECO:0007669"/>
    <property type="project" value="Ensembl"/>
</dbReference>
<dbReference type="GO" id="GO:0034695">
    <property type="term" value="P:response to prostaglandin E"/>
    <property type="evidence" value="ECO:0007669"/>
    <property type="project" value="Ensembl"/>
</dbReference>
<dbReference type="GO" id="GO:0048545">
    <property type="term" value="P:response to steroid hormone"/>
    <property type="evidence" value="ECO:0000315"/>
    <property type="project" value="MGI"/>
</dbReference>
<dbReference type="GO" id="GO:0033574">
    <property type="term" value="P:response to testosterone"/>
    <property type="evidence" value="ECO:0007669"/>
    <property type="project" value="Ensembl"/>
</dbReference>
<dbReference type="InterPro" id="IPR002012">
    <property type="entry name" value="GnRH"/>
</dbReference>
<dbReference type="InterPro" id="IPR019792">
    <property type="entry name" value="Gonadoliberin"/>
</dbReference>
<dbReference type="InterPro" id="IPR004079">
    <property type="entry name" value="Gonadoliberin_I_precursor"/>
</dbReference>
<dbReference type="PANTHER" id="PTHR10522">
    <property type="entry name" value="GONADOLIBERIN"/>
    <property type="match status" value="1"/>
</dbReference>
<dbReference type="PANTHER" id="PTHR10522:SF0">
    <property type="entry name" value="PROGONADOLIBERIN-1"/>
    <property type="match status" value="1"/>
</dbReference>
<dbReference type="Pfam" id="PF00446">
    <property type="entry name" value="GnRH"/>
    <property type="match status" value="1"/>
</dbReference>
<dbReference type="PRINTS" id="PR01541">
    <property type="entry name" value="GONADOLIBRNI"/>
</dbReference>
<dbReference type="PROSITE" id="PS00473">
    <property type="entry name" value="GNRH"/>
    <property type="match status" value="1"/>
</dbReference>
<proteinExistence type="inferred from homology"/>
<comment type="function">
    <text>Stimulates the secretion of gonadotropins; it stimulates the secretion of both luteinizing and follicle-stimulating hormones.</text>
</comment>
<comment type="subcellular location">
    <subcellularLocation>
        <location evidence="4">Secreted</location>
    </subcellularLocation>
</comment>
<comment type="PTM">
    <molecule>Gonadoliberin-1</molecule>
    <text evidence="2">The precursor is cleaved by ACE, which removes the Gly-Lys-Arg peptide at the C-terminus, leading to mature hormone. The mature form of Gonadoliberin-1 is also cleaved and degraded by ACE.</text>
</comment>
<comment type="similarity">
    <text evidence="5">Belongs to the GnRH family.</text>
</comment>
<name>GON1_MOUSE</name>
<feature type="signal peptide" evidence="3">
    <location>
        <begin position="1"/>
        <end position="21"/>
    </location>
</feature>
<feature type="chain" id="PRO_0000012404" description="Progonadoliberin-1">
    <location>
        <begin position="22"/>
        <end position="90"/>
    </location>
</feature>
<feature type="peptide" id="PRO_0000012405" description="Gonadoliberin-1">
    <location>
        <begin position="22"/>
        <end position="31"/>
    </location>
</feature>
<feature type="peptide" id="PRO_0000012406" description="Prolactin release-inhibiting factor 1">
    <location>
        <begin position="35"/>
        <end position="90"/>
    </location>
</feature>
<feature type="site" description="Cleavage; by ACE" evidence="2">
    <location>
        <begin position="24"/>
        <end position="25"/>
    </location>
</feature>
<feature type="site" description="Appears to be essential for biological activity">
    <location>
        <position position="24"/>
    </location>
</feature>
<feature type="site" description="Cleavage; by ACE" evidence="2">
    <location>
        <begin position="26"/>
        <end position="27"/>
    </location>
</feature>
<feature type="site" description="Cleavage; by ACE" evidence="2">
    <location>
        <begin position="28"/>
        <end position="29"/>
    </location>
</feature>
<feature type="site" description="Cleavage; by ACE" evidence="2">
    <location>
        <begin position="31"/>
        <end position="32"/>
    </location>
</feature>
<feature type="modified residue" description="Pyrrolidone carboxylic acid" evidence="2">
    <location>
        <position position="22"/>
    </location>
</feature>
<feature type="modified residue" description="Glycine amide" evidence="1">
    <location>
        <position position="31"/>
    </location>
</feature>
<reference key="1">
    <citation type="journal article" date="1986" name="Science">
        <title>A deletion truncating the gonadotropin-releasing hormone gene is responsible for hypogonadism in the hpg mouse.</title>
        <authorList>
            <person name="Mason A.J."/>
            <person name="Hayflick J.S."/>
            <person name="Zoeller R.T."/>
            <person name="Young W.S. III"/>
            <person name="Phillips H.S."/>
            <person name="Nikolics K."/>
            <person name="Seeburg P.H."/>
        </authorList>
    </citation>
    <scope>NUCLEOTIDE SEQUENCE [GENOMIC DNA]</scope>
</reference>
<reference key="2">
    <citation type="journal article" date="2023" name="Biomolecules">
        <title>D-Aspartate Depletion Perturbs Steroidogenesis and Spermatogenesis in Mice.</title>
        <authorList>
            <person name="Santillo A."/>
            <person name="Falvo S."/>
            <person name="Venditti M."/>
            <person name="Di Maio A."/>
            <person name="Chieffi Baccari G."/>
            <person name="Errico F."/>
            <person name="Usiello A."/>
            <person name="Minucci S."/>
            <person name="Di Fiore M.M."/>
        </authorList>
    </citation>
    <scope>SUBCELLULAR LOCATION</scope>
</reference>
<organism>
    <name type="scientific">Mus musculus</name>
    <name type="common">Mouse</name>
    <dbReference type="NCBI Taxonomy" id="10090"/>
    <lineage>
        <taxon>Eukaryota</taxon>
        <taxon>Metazoa</taxon>
        <taxon>Chordata</taxon>
        <taxon>Craniata</taxon>
        <taxon>Vertebrata</taxon>
        <taxon>Euteleostomi</taxon>
        <taxon>Mammalia</taxon>
        <taxon>Eutheria</taxon>
        <taxon>Euarchontoglires</taxon>
        <taxon>Glires</taxon>
        <taxon>Rodentia</taxon>
        <taxon>Myomorpha</taxon>
        <taxon>Muroidea</taxon>
        <taxon>Muridae</taxon>
        <taxon>Murinae</taxon>
        <taxon>Mus</taxon>
        <taxon>Mus</taxon>
    </lineage>
</organism>
<gene>
    <name type="primary">Gnrh1</name>
    <name type="synonym">Gnrh</name>
</gene>